<proteinExistence type="inferred from homology"/>
<organism>
    <name type="scientific">Staphylococcus aureus (strain JH1)</name>
    <dbReference type="NCBI Taxonomy" id="359787"/>
    <lineage>
        <taxon>Bacteria</taxon>
        <taxon>Bacillati</taxon>
        <taxon>Bacillota</taxon>
        <taxon>Bacilli</taxon>
        <taxon>Bacillales</taxon>
        <taxon>Staphylococcaceae</taxon>
        <taxon>Staphylococcus</taxon>
    </lineage>
</organism>
<accession>A6U3V1</accession>
<sequence length="121" mass="13719">MARIAGVDIPREKRVVISLTYIYGIGTSTAQKILEEANVSADTRVKDLTDDELGRIREVVDGYKVEGDLRRETNLNIKRLMEISSYRGIRHRRGLPVRGQKTKNNARTRKGPVKTVANKKK</sequence>
<gene>
    <name evidence="1" type="primary">rpsM</name>
    <name type="ordered locus">SaurJH1_2294</name>
</gene>
<feature type="chain" id="PRO_1000086263" description="Small ribosomal subunit protein uS13">
    <location>
        <begin position="1"/>
        <end position="121"/>
    </location>
</feature>
<feature type="region of interest" description="Disordered" evidence="2">
    <location>
        <begin position="91"/>
        <end position="121"/>
    </location>
</feature>
<evidence type="ECO:0000255" key="1">
    <source>
        <dbReference type="HAMAP-Rule" id="MF_01315"/>
    </source>
</evidence>
<evidence type="ECO:0000256" key="2">
    <source>
        <dbReference type="SAM" id="MobiDB-lite"/>
    </source>
</evidence>
<evidence type="ECO:0000305" key="3"/>
<dbReference type="EMBL" id="CP000736">
    <property type="protein sequence ID" value="ABR53119.1"/>
    <property type="molecule type" value="Genomic_DNA"/>
</dbReference>
<dbReference type="SMR" id="A6U3V1"/>
<dbReference type="KEGG" id="sah:SaurJH1_2294"/>
<dbReference type="HOGENOM" id="CLU_103849_1_1_9"/>
<dbReference type="GO" id="GO:0005829">
    <property type="term" value="C:cytosol"/>
    <property type="evidence" value="ECO:0007669"/>
    <property type="project" value="TreeGrafter"/>
</dbReference>
<dbReference type="GO" id="GO:0015935">
    <property type="term" value="C:small ribosomal subunit"/>
    <property type="evidence" value="ECO:0007669"/>
    <property type="project" value="TreeGrafter"/>
</dbReference>
<dbReference type="GO" id="GO:0019843">
    <property type="term" value="F:rRNA binding"/>
    <property type="evidence" value="ECO:0007669"/>
    <property type="project" value="UniProtKB-UniRule"/>
</dbReference>
<dbReference type="GO" id="GO:0003735">
    <property type="term" value="F:structural constituent of ribosome"/>
    <property type="evidence" value="ECO:0007669"/>
    <property type="project" value="InterPro"/>
</dbReference>
<dbReference type="GO" id="GO:0000049">
    <property type="term" value="F:tRNA binding"/>
    <property type="evidence" value="ECO:0007669"/>
    <property type="project" value="UniProtKB-UniRule"/>
</dbReference>
<dbReference type="GO" id="GO:0006412">
    <property type="term" value="P:translation"/>
    <property type="evidence" value="ECO:0007669"/>
    <property type="project" value="UniProtKB-UniRule"/>
</dbReference>
<dbReference type="FunFam" id="1.10.8.50:FF:000001">
    <property type="entry name" value="30S ribosomal protein S13"/>
    <property type="match status" value="1"/>
</dbReference>
<dbReference type="FunFam" id="4.10.910.10:FF:000001">
    <property type="entry name" value="30S ribosomal protein S13"/>
    <property type="match status" value="1"/>
</dbReference>
<dbReference type="Gene3D" id="1.10.8.50">
    <property type="match status" value="1"/>
</dbReference>
<dbReference type="Gene3D" id="4.10.910.10">
    <property type="entry name" value="30s ribosomal protein s13, domain 2"/>
    <property type="match status" value="1"/>
</dbReference>
<dbReference type="HAMAP" id="MF_01315">
    <property type="entry name" value="Ribosomal_uS13"/>
    <property type="match status" value="1"/>
</dbReference>
<dbReference type="InterPro" id="IPR027437">
    <property type="entry name" value="Rbsml_uS13_C"/>
</dbReference>
<dbReference type="InterPro" id="IPR001892">
    <property type="entry name" value="Ribosomal_uS13"/>
</dbReference>
<dbReference type="InterPro" id="IPR010979">
    <property type="entry name" value="Ribosomal_uS13-like_H2TH"/>
</dbReference>
<dbReference type="InterPro" id="IPR019980">
    <property type="entry name" value="Ribosomal_uS13_bac-type"/>
</dbReference>
<dbReference type="InterPro" id="IPR018269">
    <property type="entry name" value="Ribosomal_uS13_CS"/>
</dbReference>
<dbReference type="NCBIfam" id="TIGR03631">
    <property type="entry name" value="uS13_bact"/>
    <property type="match status" value="1"/>
</dbReference>
<dbReference type="PANTHER" id="PTHR10871">
    <property type="entry name" value="30S RIBOSOMAL PROTEIN S13/40S RIBOSOMAL PROTEIN S18"/>
    <property type="match status" value="1"/>
</dbReference>
<dbReference type="PANTHER" id="PTHR10871:SF1">
    <property type="entry name" value="SMALL RIBOSOMAL SUBUNIT PROTEIN US13M"/>
    <property type="match status" value="1"/>
</dbReference>
<dbReference type="Pfam" id="PF00416">
    <property type="entry name" value="Ribosomal_S13"/>
    <property type="match status" value="1"/>
</dbReference>
<dbReference type="PIRSF" id="PIRSF002134">
    <property type="entry name" value="Ribosomal_S13"/>
    <property type="match status" value="1"/>
</dbReference>
<dbReference type="SUPFAM" id="SSF46946">
    <property type="entry name" value="S13-like H2TH domain"/>
    <property type="match status" value="1"/>
</dbReference>
<dbReference type="PROSITE" id="PS00646">
    <property type="entry name" value="RIBOSOMAL_S13_1"/>
    <property type="match status" value="1"/>
</dbReference>
<dbReference type="PROSITE" id="PS50159">
    <property type="entry name" value="RIBOSOMAL_S13_2"/>
    <property type="match status" value="1"/>
</dbReference>
<protein>
    <recommendedName>
        <fullName evidence="1">Small ribosomal subunit protein uS13</fullName>
    </recommendedName>
    <alternativeName>
        <fullName evidence="3">30S ribosomal protein S13</fullName>
    </alternativeName>
</protein>
<reference key="1">
    <citation type="submission" date="2007-06" db="EMBL/GenBank/DDBJ databases">
        <title>Complete sequence of chromosome of Staphylococcus aureus subsp. aureus JH1.</title>
        <authorList>
            <consortium name="US DOE Joint Genome Institute"/>
            <person name="Copeland A."/>
            <person name="Lucas S."/>
            <person name="Lapidus A."/>
            <person name="Barry K."/>
            <person name="Detter J.C."/>
            <person name="Glavina del Rio T."/>
            <person name="Hammon N."/>
            <person name="Israni S."/>
            <person name="Dalin E."/>
            <person name="Tice H."/>
            <person name="Pitluck S."/>
            <person name="Chain P."/>
            <person name="Malfatti S."/>
            <person name="Shin M."/>
            <person name="Vergez L."/>
            <person name="Schmutz J."/>
            <person name="Larimer F."/>
            <person name="Land M."/>
            <person name="Hauser L."/>
            <person name="Kyrpides N."/>
            <person name="Ivanova N."/>
            <person name="Tomasz A."/>
            <person name="Richardson P."/>
        </authorList>
    </citation>
    <scope>NUCLEOTIDE SEQUENCE [LARGE SCALE GENOMIC DNA]</scope>
    <source>
        <strain>JH1</strain>
    </source>
</reference>
<comment type="function">
    <text evidence="1">Located at the top of the head of the 30S subunit, it contacts several helices of the 16S rRNA. In the 70S ribosome it contacts the 23S rRNA (bridge B1a) and protein L5 of the 50S subunit (bridge B1b), connecting the 2 subunits; these bridges are implicated in subunit movement. Contacts the tRNAs in the A and P-sites.</text>
</comment>
<comment type="subunit">
    <text evidence="1">Part of the 30S ribosomal subunit. Forms a loose heterodimer with protein S19. Forms two bridges to the 50S subunit in the 70S ribosome.</text>
</comment>
<comment type="similarity">
    <text evidence="1">Belongs to the universal ribosomal protein uS13 family.</text>
</comment>
<name>RS13_STAA2</name>
<keyword id="KW-0687">Ribonucleoprotein</keyword>
<keyword id="KW-0689">Ribosomal protein</keyword>
<keyword id="KW-0694">RNA-binding</keyword>
<keyword id="KW-0699">rRNA-binding</keyword>
<keyword id="KW-0820">tRNA-binding</keyword>